<name>RIMP_LIMRD</name>
<comment type="function">
    <text evidence="1">Required for maturation of 30S ribosomal subunits.</text>
</comment>
<comment type="subcellular location">
    <subcellularLocation>
        <location evidence="1">Cytoplasm</location>
    </subcellularLocation>
</comment>
<comment type="similarity">
    <text evidence="1">Belongs to the RimP family.</text>
</comment>
<dbReference type="EMBL" id="CP000705">
    <property type="protein sequence ID" value="ABQ82960.1"/>
    <property type="molecule type" value="Genomic_DNA"/>
</dbReference>
<dbReference type="RefSeq" id="WP_011953434.1">
    <property type="nucleotide sequence ID" value="NC_009513.1"/>
</dbReference>
<dbReference type="SMR" id="A5VJD6"/>
<dbReference type="STRING" id="557436.Lreu_0695"/>
<dbReference type="KEGG" id="lre:Lreu_0695"/>
<dbReference type="eggNOG" id="COG0779">
    <property type="taxonomic scope" value="Bacteria"/>
</dbReference>
<dbReference type="HOGENOM" id="CLU_070525_2_0_9"/>
<dbReference type="Proteomes" id="UP000001991">
    <property type="component" value="Chromosome"/>
</dbReference>
<dbReference type="GO" id="GO:0005829">
    <property type="term" value="C:cytosol"/>
    <property type="evidence" value="ECO:0007669"/>
    <property type="project" value="TreeGrafter"/>
</dbReference>
<dbReference type="GO" id="GO:0000028">
    <property type="term" value="P:ribosomal small subunit assembly"/>
    <property type="evidence" value="ECO:0007669"/>
    <property type="project" value="TreeGrafter"/>
</dbReference>
<dbReference type="GO" id="GO:0006412">
    <property type="term" value="P:translation"/>
    <property type="evidence" value="ECO:0007669"/>
    <property type="project" value="TreeGrafter"/>
</dbReference>
<dbReference type="CDD" id="cd01734">
    <property type="entry name" value="YlxS_C"/>
    <property type="match status" value="1"/>
</dbReference>
<dbReference type="FunFam" id="3.30.300.70:FF:000001">
    <property type="entry name" value="Ribosome maturation factor RimP"/>
    <property type="match status" value="1"/>
</dbReference>
<dbReference type="Gene3D" id="2.30.30.180">
    <property type="entry name" value="Ribosome maturation factor RimP, C-terminal domain"/>
    <property type="match status" value="1"/>
</dbReference>
<dbReference type="Gene3D" id="3.30.300.70">
    <property type="entry name" value="RimP-like superfamily, N-terminal"/>
    <property type="match status" value="1"/>
</dbReference>
<dbReference type="HAMAP" id="MF_01077">
    <property type="entry name" value="RimP"/>
    <property type="match status" value="1"/>
</dbReference>
<dbReference type="InterPro" id="IPR003728">
    <property type="entry name" value="Ribosome_maturation_RimP"/>
</dbReference>
<dbReference type="InterPro" id="IPR028998">
    <property type="entry name" value="RimP_C"/>
</dbReference>
<dbReference type="InterPro" id="IPR036847">
    <property type="entry name" value="RimP_C_sf"/>
</dbReference>
<dbReference type="InterPro" id="IPR028989">
    <property type="entry name" value="RimP_N"/>
</dbReference>
<dbReference type="InterPro" id="IPR035956">
    <property type="entry name" value="RimP_N_sf"/>
</dbReference>
<dbReference type="NCBIfam" id="NF000928">
    <property type="entry name" value="PRK00092.1-2"/>
    <property type="match status" value="1"/>
</dbReference>
<dbReference type="PANTHER" id="PTHR33867">
    <property type="entry name" value="RIBOSOME MATURATION FACTOR RIMP"/>
    <property type="match status" value="1"/>
</dbReference>
<dbReference type="PANTHER" id="PTHR33867:SF1">
    <property type="entry name" value="RIBOSOME MATURATION FACTOR RIMP"/>
    <property type="match status" value="1"/>
</dbReference>
<dbReference type="Pfam" id="PF17384">
    <property type="entry name" value="DUF150_C"/>
    <property type="match status" value="1"/>
</dbReference>
<dbReference type="Pfam" id="PF02576">
    <property type="entry name" value="RimP_N"/>
    <property type="match status" value="1"/>
</dbReference>
<dbReference type="SUPFAM" id="SSF74942">
    <property type="entry name" value="YhbC-like, C-terminal domain"/>
    <property type="match status" value="1"/>
</dbReference>
<dbReference type="SUPFAM" id="SSF75420">
    <property type="entry name" value="YhbC-like, N-terminal domain"/>
    <property type="match status" value="1"/>
</dbReference>
<reference key="1">
    <citation type="journal article" date="2011" name="PLoS Genet.">
        <title>The evolution of host specialization in the vertebrate gut symbiont Lactobacillus reuteri.</title>
        <authorList>
            <person name="Frese S.A."/>
            <person name="Benson A.K."/>
            <person name="Tannock G.W."/>
            <person name="Loach D.M."/>
            <person name="Kim J."/>
            <person name="Zhang M."/>
            <person name="Oh P.L."/>
            <person name="Heng N.C."/>
            <person name="Patil P.B."/>
            <person name="Juge N."/>
            <person name="Mackenzie D.A."/>
            <person name="Pearson B.M."/>
            <person name="Lapidus A."/>
            <person name="Dalin E."/>
            <person name="Tice H."/>
            <person name="Goltsman E."/>
            <person name="Land M."/>
            <person name="Hauser L."/>
            <person name="Ivanova N."/>
            <person name="Kyrpides N.C."/>
            <person name="Walter J."/>
        </authorList>
    </citation>
    <scope>NUCLEOTIDE SEQUENCE [LARGE SCALE GENOMIC DNA]</scope>
    <source>
        <strain>DSM 20016</strain>
    </source>
</reference>
<protein>
    <recommendedName>
        <fullName evidence="1">Ribosome maturation factor RimP</fullName>
    </recommendedName>
</protein>
<evidence type="ECO:0000255" key="1">
    <source>
        <dbReference type="HAMAP-Rule" id="MF_01077"/>
    </source>
</evidence>
<sequence length="157" mass="18184">MSSVVETVTDLVTPILQDHDFYLYDLEFVKEGKSWYLRVYINKDGGITLEDCALVSDELSEALDNVEPDPIPQAYFLEVSSPGAERPLKKEEDYQRAIDHYIHISLYQQINGQKVYEGTLTQLSDKEITLDYLDKTRHRQITIDRQKIAQARLAIKF</sequence>
<organism>
    <name type="scientific">Limosilactobacillus reuteri (strain DSM 20016)</name>
    <name type="common">Lactobacillus reuteri</name>
    <dbReference type="NCBI Taxonomy" id="557436"/>
    <lineage>
        <taxon>Bacteria</taxon>
        <taxon>Bacillati</taxon>
        <taxon>Bacillota</taxon>
        <taxon>Bacilli</taxon>
        <taxon>Lactobacillales</taxon>
        <taxon>Lactobacillaceae</taxon>
        <taxon>Limosilactobacillus</taxon>
    </lineage>
</organism>
<accession>A5VJD6</accession>
<feature type="chain" id="PRO_1000064726" description="Ribosome maturation factor RimP">
    <location>
        <begin position="1"/>
        <end position="157"/>
    </location>
</feature>
<gene>
    <name evidence="1" type="primary">rimP</name>
    <name type="ordered locus">Lreu_0695</name>
</gene>
<proteinExistence type="inferred from homology"/>
<keyword id="KW-0963">Cytoplasm</keyword>
<keyword id="KW-1185">Reference proteome</keyword>
<keyword id="KW-0690">Ribosome biogenesis</keyword>